<feature type="chain" id="PRO_0000355092" description="Moesin/ezrin/radixin homolog 1">
    <location>
        <begin position="1"/>
        <end position="583"/>
    </location>
</feature>
<feature type="domain" description="FERM" evidence="4">
    <location>
        <begin position="11"/>
        <end position="301"/>
    </location>
</feature>
<feature type="region of interest" description="Disordered" evidence="5">
    <location>
        <begin position="466"/>
        <end position="518"/>
    </location>
</feature>
<feature type="region of interest" description="Disordered" evidence="5">
    <location>
        <begin position="539"/>
        <end position="558"/>
    </location>
</feature>
<feature type="compositionally biased region" description="Acidic residues" evidence="5">
    <location>
        <begin position="476"/>
        <end position="485"/>
    </location>
</feature>
<feature type="compositionally biased region" description="Basic and acidic residues" evidence="5">
    <location>
        <begin position="496"/>
        <end position="518"/>
    </location>
</feature>
<feature type="modified residue" description="Phosphothreonine" evidence="2">
    <location>
        <position position="564"/>
    </location>
</feature>
<accession>Q170J7</accession>
<name>MOEH_AEDAE</name>
<comment type="function">
    <text evidence="2">Involved in connections of major cytoskeletal structures to the plasma membrane.</text>
</comment>
<comment type="subunit">
    <text evidence="1">Interacts with cytoskeletal actin.</text>
</comment>
<comment type="subcellular location">
    <subcellularLocation>
        <location evidence="2">Cell junction</location>
        <location evidence="2">Adherens junction</location>
    </subcellularLocation>
    <subcellularLocation>
        <location evidence="2">Cell projection</location>
        <location evidence="2">Microvillus</location>
    </subcellularLocation>
    <subcellularLocation>
        <location evidence="2">Cell projection</location>
        <location evidence="2">Rhabdomere</location>
    </subcellularLocation>
    <subcellularLocation>
        <location evidence="3">Cell membrane</location>
        <topology evidence="3">Peripheral membrane protein</topology>
        <orientation evidence="3">Cytoplasmic side</orientation>
    </subcellularLocation>
    <subcellularLocation>
        <location evidence="3">Cytoplasm</location>
        <location evidence="3">Cytoskeleton</location>
    </subcellularLocation>
</comment>
<gene>
    <name evidence="2" type="primary">Moe</name>
    <name type="ORF">AAEL007915</name>
</gene>
<evidence type="ECO:0000250" key="1"/>
<evidence type="ECO:0000250" key="2">
    <source>
        <dbReference type="UniProtKB" id="P46150"/>
    </source>
</evidence>
<evidence type="ECO:0000250" key="3">
    <source>
        <dbReference type="UniProtKB" id="Q24564"/>
    </source>
</evidence>
<evidence type="ECO:0000255" key="4">
    <source>
        <dbReference type="PROSITE-ProRule" id="PRU00084"/>
    </source>
</evidence>
<evidence type="ECO:0000256" key="5">
    <source>
        <dbReference type="SAM" id="MobiDB-lite"/>
    </source>
</evidence>
<evidence type="ECO:0000312" key="6">
    <source>
        <dbReference type="EMBL" id="EAT40344.1"/>
    </source>
</evidence>
<organism>
    <name type="scientific">Aedes aegypti</name>
    <name type="common">Yellowfever mosquito</name>
    <name type="synonym">Culex aegypti</name>
    <dbReference type="NCBI Taxonomy" id="7159"/>
    <lineage>
        <taxon>Eukaryota</taxon>
        <taxon>Metazoa</taxon>
        <taxon>Ecdysozoa</taxon>
        <taxon>Arthropoda</taxon>
        <taxon>Hexapoda</taxon>
        <taxon>Insecta</taxon>
        <taxon>Pterygota</taxon>
        <taxon>Neoptera</taxon>
        <taxon>Endopterygota</taxon>
        <taxon>Diptera</taxon>
        <taxon>Nematocera</taxon>
        <taxon>Culicoidea</taxon>
        <taxon>Culicidae</taxon>
        <taxon>Culicinae</taxon>
        <taxon>Aedini</taxon>
        <taxon>Aedes</taxon>
        <taxon>Stegomyia</taxon>
    </lineage>
</organism>
<protein>
    <recommendedName>
        <fullName evidence="2">Moesin/ezrin/radixin homolog 1</fullName>
    </recommendedName>
</protein>
<reference evidence="6" key="1">
    <citation type="journal article" date="2007" name="Science">
        <title>Genome sequence of Aedes aegypti, a major arbovirus vector.</title>
        <authorList>
            <person name="Nene V."/>
            <person name="Wortman J.R."/>
            <person name="Lawson D."/>
            <person name="Haas B.J."/>
            <person name="Kodira C.D."/>
            <person name="Tu Z.J."/>
            <person name="Loftus B.J."/>
            <person name="Xi Z."/>
            <person name="Megy K."/>
            <person name="Grabherr M."/>
            <person name="Ren Q."/>
            <person name="Zdobnov E.M."/>
            <person name="Lobo N.F."/>
            <person name="Campbell K.S."/>
            <person name="Brown S.E."/>
            <person name="Bonaldo M.F."/>
            <person name="Zhu J."/>
            <person name="Sinkins S.P."/>
            <person name="Hogenkamp D.G."/>
            <person name="Amedeo P."/>
            <person name="Arensburger P."/>
            <person name="Atkinson P.W."/>
            <person name="Bidwell S.L."/>
            <person name="Biedler J."/>
            <person name="Birney E."/>
            <person name="Bruggner R.V."/>
            <person name="Costas J."/>
            <person name="Coy M.R."/>
            <person name="Crabtree J."/>
            <person name="Crawford M."/>
            <person name="DeBruyn B."/>
            <person name="DeCaprio D."/>
            <person name="Eiglmeier K."/>
            <person name="Eisenstadt E."/>
            <person name="El-Dorry H."/>
            <person name="Gelbart W.M."/>
            <person name="Gomes S.L."/>
            <person name="Hammond M."/>
            <person name="Hannick L.I."/>
            <person name="Hogan J.R."/>
            <person name="Holmes M.H."/>
            <person name="Jaffe D."/>
            <person name="Johnston S.J."/>
            <person name="Kennedy R.C."/>
            <person name="Koo H."/>
            <person name="Kravitz S."/>
            <person name="Kriventseva E.V."/>
            <person name="Kulp D."/>
            <person name="Labutti K."/>
            <person name="Lee E."/>
            <person name="Li S."/>
            <person name="Lovin D.D."/>
            <person name="Mao C."/>
            <person name="Mauceli E."/>
            <person name="Menck C.F."/>
            <person name="Miller J.R."/>
            <person name="Montgomery P."/>
            <person name="Mori A."/>
            <person name="Nascimento A.L."/>
            <person name="Naveira H.F."/>
            <person name="Nusbaum C."/>
            <person name="O'Leary S.B."/>
            <person name="Orvis J."/>
            <person name="Pertea M."/>
            <person name="Quesneville H."/>
            <person name="Reidenbach K.R."/>
            <person name="Rogers Y.-H.C."/>
            <person name="Roth C.W."/>
            <person name="Schneider J.R."/>
            <person name="Schatz M."/>
            <person name="Shumway M."/>
            <person name="Stanke M."/>
            <person name="Stinson E.O."/>
            <person name="Tubio J.M.C."/>
            <person name="Vanzee J.P."/>
            <person name="Verjovski-Almeida S."/>
            <person name="Werner D."/>
            <person name="White O.R."/>
            <person name="Wyder S."/>
            <person name="Zeng Q."/>
            <person name="Zhao Q."/>
            <person name="Zhao Y."/>
            <person name="Hill C.A."/>
            <person name="Raikhel A.S."/>
            <person name="Soares M.B."/>
            <person name="Knudson D.L."/>
            <person name="Lee N.H."/>
            <person name="Galagan J."/>
            <person name="Salzberg S.L."/>
            <person name="Paulsen I.T."/>
            <person name="Dimopoulos G."/>
            <person name="Collins F.H."/>
            <person name="Bruce B."/>
            <person name="Fraser-Liggett C.M."/>
            <person name="Severson D.W."/>
        </authorList>
    </citation>
    <scope>NUCLEOTIDE SEQUENCE [LARGE SCALE GENOMIC DNA]</scope>
    <source>
        <strain>LVPib12</strain>
    </source>
</reference>
<sequence length="583" mass="69067">MGRPRTARVFMNVRVTTMDAELEFAIQQSTTGKQLFDQVVKTIGLREVWFFGLQYTDSKGDLTWIKLYKKVMSQDVQKGDPLQFKFRAKFYPEDVAEELIQDITLRLFYLQVKNAILSDEIYCPPETSVLLASYAVQARHGDYNKTTHVPGFLVNDRLLPQRVIDQHKMSKDEWENSITTWWQEHRGMLREDAMMEYLKIAQDLEMYGVNYFEIRNKKGTELWLGVDALGLNIYEKDDRLTPKIGFPWSEIRNISFNDRKFIIKPIDKKAPDFVFFAPRVRINKRILALCMGNHELYMRRRKPDTIDVQQMKAQAREEKNAKQQEREKLQLALAARERAEKKQQEYEDRLRTMQEEMERSQANLIEAQEMIRRLEDQLKQLQFAKDELEARQNELQVMIKRLEESKNMEVAERQKLEDEIRAKQEEVQKIQEEVSVKDTETKRLQEEVEEARRKQNEAAAALLAATTTPNHHHVDEEEEDNEEELTNGAENGTSRDYSKDFDTDEHIKDPVEERRTLAERNERLHDQLKALKQDLALSRDDTMETANDKIHRENVRQGRDKYKTLREIRKGNTKRRVDQFENM</sequence>
<keyword id="KW-0009">Actin-binding</keyword>
<keyword id="KW-0965">Cell junction</keyword>
<keyword id="KW-1003">Cell membrane</keyword>
<keyword id="KW-0966">Cell projection</keyword>
<keyword id="KW-0963">Cytoplasm</keyword>
<keyword id="KW-0206">Cytoskeleton</keyword>
<keyword id="KW-0472">Membrane</keyword>
<keyword id="KW-0597">Phosphoprotein</keyword>
<keyword id="KW-1185">Reference proteome</keyword>
<dbReference type="EMBL" id="CH477473">
    <property type="protein sequence ID" value="EAT40344.1"/>
    <property type="molecule type" value="Genomic_DNA"/>
</dbReference>
<dbReference type="RefSeq" id="XP_001652975.1">
    <property type="nucleotide sequence ID" value="XM_001652925.1"/>
</dbReference>
<dbReference type="SMR" id="Q170J7"/>
<dbReference type="FunCoup" id="Q170J7">
    <property type="interactions" value="773"/>
</dbReference>
<dbReference type="STRING" id="7159.Q170J7"/>
<dbReference type="PaxDb" id="7159-AAEL007915-PA"/>
<dbReference type="VEuPathDB" id="VectorBase:AAEL007915"/>
<dbReference type="eggNOG" id="KOG3529">
    <property type="taxonomic scope" value="Eukaryota"/>
</dbReference>
<dbReference type="HOGENOM" id="CLU_003623_6_2_1"/>
<dbReference type="InParanoid" id="Q170J7"/>
<dbReference type="OMA" id="DMKTQET"/>
<dbReference type="PhylomeDB" id="Q170J7"/>
<dbReference type="Proteomes" id="UP000008820">
    <property type="component" value="Unassembled WGS sequence"/>
</dbReference>
<dbReference type="Proteomes" id="UP000682892">
    <property type="component" value="Chromosome 3"/>
</dbReference>
<dbReference type="GO" id="GO:0005912">
    <property type="term" value="C:adherens junction"/>
    <property type="evidence" value="ECO:0000250"/>
    <property type="project" value="UniProtKB"/>
</dbReference>
<dbReference type="GO" id="GO:0005737">
    <property type="term" value="C:cytoplasm"/>
    <property type="evidence" value="ECO:0007669"/>
    <property type="project" value="UniProtKB-KW"/>
</dbReference>
<dbReference type="GO" id="GO:0005856">
    <property type="term" value="C:cytoskeleton"/>
    <property type="evidence" value="ECO:0007669"/>
    <property type="project" value="UniProtKB-SubCell"/>
</dbReference>
<dbReference type="GO" id="GO:0005902">
    <property type="term" value="C:microvillus"/>
    <property type="evidence" value="ECO:0007669"/>
    <property type="project" value="UniProtKB-SubCell"/>
</dbReference>
<dbReference type="GO" id="GO:0005886">
    <property type="term" value="C:plasma membrane"/>
    <property type="evidence" value="ECO:0007669"/>
    <property type="project" value="UniProtKB-SubCell"/>
</dbReference>
<dbReference type="GO" id="GO:0016028">
    <property type="term" value="C:rhabdomere"/>
    <property type="evidence" value="ECO:0007669"/>
    <property type="project" value="UniProtKB-SubCell"/>
</dbReference>
<dbReference type="GO" id="GO:0003779">
    <property type="term" value="F:actin binding"/>
    <property type="evidence" value="ECO:0000250"/>
    <property type="project" value="UniProtKB"/>
</dbReference>
<dbReference type="GO" id="GO:0009887">
    <property type="term" value="P:animal organ morphogenesis"/>
    <property type="evidence" value="ECO:0007669"/>
    <property type="project" value="UniProtKB-ARBA"/>
</dbReference>
<dbReference type="GO" id="GO:0045197">
    <property type="term" value="P:establishment or maintenance of epithelial cell apical/basal polarity"/>
    <property type="evidence" value="ECO:0000250"/>
    <property type="project" value="UniProtKB"/>
</dbReference>
<dbReference type="GO" id="GO:0030182">
    <property type="term" value="P:neuron differentiation"/>
    <property type="evidence" value="ECO:0007669"/>
    <property type="project" value="UniProtKB-ARBA"/>
</dbReference>
<dbReference type="CDD" id="cd14473">
    <property type="entry name" value="FERM_B-lobe"/>
    <property type="match status" value="1"/>
</dbReference>
<dbReference type="CDD" id="cd13194">
    <property type="entry name" value="FERM_C_ERM"/>
    <property type="match status" value="1"/>
</dbReference>
<dbReference type="CDD" id="cd17187">
    <property type="entry name" value="FERM_F1_ERM"/>
    <property type="match status" value="1"/>
</dbReference>
<dbReference type="FunFam" id="2.30.29.30:FF:000003">
    <property type="entry name" value="Radixin isoform 1"/>
    <property type="match status" value="1"/>
</dbReference>
<dbReference type="FunFam" id="1.20.80.10:FF:000002">
    <property type="entry name" value="radixin isoform X1"/>
    <property type="match status" value="1"/>
</dbReference>
<dbReference type="FunFam" id="3.10.20.90:FF:000013">
    <property type="entry name" value="radixin isoform X1"/>
    <property type="match status" value="1"/>
</dbReference>
<dbReference type="FunFam" id="1.20.5.450:FF:000001">
    <property type="entry name" value="radixin isoform X2"/>
    <property type="match status" value="1"/>
</dbReference>
<dbReference type="Gene3D" id="1.20.5.450">
    <property type="match status" value="1"/>
</dbReference>
<dbReference type="Gene3D" id="1.20.80.10">
    <property type="match status" value="1"/>
</dbReference>
<dbReference type="Gene3D" id="6.10.360.10">
    <property type="match status" value="1"/>
</dbReference>
<dbReference type="Gene3D" id="3.10.20.90">
    <property type="entry name" value="Phosphatidylinositol 3-kinase Catalytic Subunit, Chain A, domain 1"/>
    <property type="match status" value="1"/>
</dbReference>
<dbReference type="Gene3D" id="2.30.29.30">
    <property type="entry name" value="Pleckstrin-homology domain (PH domain)/Phosphotyrosine-binding domain (PTB)"/>
    <property type="match status" value="1"/>
</dbReference>
<dbReference type="InterPro" id="IPR019749">
    <property type="entry name" value="Band_41_domain"/>
</dbReference>
<dbReference type="InterPro" id="IPR011174">
    <property type="entry name" value="ERM"/>
</dbReference>
<dbReference type="InterPro" id="IPR011259">
    <property type="entry name" value="ERM_C_dom"/>
</dbReference>
<dbReference type="InterPro" id="IPR041789">
    <property type="entry name" value="ERM_FERM_C"/>
</dbReference>
<dbReference type="InterPro" id="IPR046810">
    <property type="entry name" value="ERM_helical"/>
</dbReference>
<dbReference type="InterPro" id="IPR000798">
    <property type="entry name" value="Ez/rad/moesin-like"/>
</dbReference>
<dbReference type="InterPro" id="IPR014352">
    <property type="entry name" value="FERM/acyl-CoA-bd_prot_sf"/>
</dbReference>
<dbReference type="InterPro" id="IPR035963">
    <property type="entry name" value="FERM_2"/>
</dbReference>
<dbReference type="InterPro" id="IPR019748">
    <property type="entry name" value="FERM_central"/>
</dbReference>
<dbReference type="InterPro" id="IPR019747">
    <property type="entry name" value="FERM_CS"/>
</dbReference>
<dbReference type="InterPro" id="IPR000299">
    <property type="entry name" value="FERM_domain"/>
</dbReference>
<dbReference type="InterPro" id="IPR018979">
    <property type="entry name" value="FERM_N"/>
</dbReference>
<dbReference type="InterPro" id="IPR018980">
    <property type="entry name" value="FERM_PH-like_C"/>
</dbReference>
<dbReference type="InterPro" id="IPR008954">
    <property type="entry name" value="Moesin_tail_sf"/>
</dbReference>
<dbReference type="InterPro" id="IPR011993">
    <property type="entry name" value="PH-like_dom_sf"/>
</dbReference>
<dbReference type="InterPro" id="IPR029071">
    <property type="entry name" value="Ubiquitin-like_domsf"/>
</dbReference>
<dbReference type="PANTHER" id="PTHR23281">
    <property type="entry name" value="MERLIN/MOESIN/EZRIN/RADIXIN"/>
    <property type="match status" value="1"/>
</dbReference>
<dbReference type="Pfam" id="PF00769">
    <property type="entry name" value="ERM_C"/>
    <property type="match status" value="1"/>
</dbReference>
<dbReference type="Pfam" id="PF20492">
    <property type="entry name" value="ERM_helical"/>
    <property type="match status" value="1"/>
</dbReference>
<dbReference type="Pfam" id="PF09380">
    <property type="entry name" value="FERM_C"/>
    <property type="match status" value="1"/>
</dbReference>
<dbReference type="Pfam" id="PF00373">
    <property type="entry name" value="FERM_M"/>
    <property type="match status" value="1"/>
</dbReference>
<dbReference type="Pfam" id="PF09379">
    <property type="entry name" value="FERM_N"/>
    <property type="match status" value="1"/>
</dbReference>
<dbReference type="PIRSF" id="PIRSF002305">
    <property type="entry name" value="ERM"/>
    <property type="match status" value="1"/>
</dbReference>
<dbReference type="PRINTS" id="PR00935">
    <property type="entry name" value="BAND41"/>
</dbReference>
<dbReference type="PRINTS" id="PR00661">
    <property type="entry name" value="ERMFAMILY"/>
</dbReference>
<dbReference type="SMART" id="SM00295">
    <property type="entry name" value="B41"/>
    <property type="match status" value="1"/>
</dbReference>
<dbReference type="SMART" id="SM01196">
    <property type="entry name" value="FERM_C"/>
    <property type="match status" value="1"/>
</dbReference>
<dbReference type="SUPFAM" id="SSF48678">
    <property type="entry name" value="Moesin tail domain"/>
    <property type="match status" value="1"/>
</dbReference>
<dbReference type="SUPFAM" id="SSF50729">
    <property type="entry name" value="PH domain-like"/>
    <property type="match status" value="1"/>
</dbReference>
<dbReference type="SUPFAM" id="SSF47031">
    <property type="entry name" value="Second domain of FERM"/>
    <property type="match status" value="1"/>
</dbReference>
<dbReference type="SUPFAM" id="SSF54236">
    <property type="entry name" value="Ubiquitin-like"/>
    <property type="match status" value="1"/>
</dbReference>
<dbReference type="PROSITE" id="PS00660">
    <property type="entry name" value="FERM_1"/>
    <property type="match status" value="1"/>
</dbReference>
<dbReference type="PROSITE" id="PS00661">
    <property type="entry name" value="FERM_2"/>
    <property type="match status" value="1"/>
</dbReference>
<dbReference type="PROSITE" id="PS50057">
    <property type="entry name" value="FERM_3"/>
    <property type="match status" value="1"/>
</dbReference>
<proteinExistence type="inferred from homology"/>